<feature type="chain" id="PRO_1000134236" description="Transcription initiation factor IIB">
    <location>
        <begin position="1"/>
        <end position="334"/>
    </location>
</feature>
<feature type="repeat" description="1">
    <location>
        <begin position="151"/>
        <end position="234"/>
    </location>
</feature>
<feature type="repeat" description="2">
    <location>
        <begin position="245"/>
        <end position="326"/>
    </location>
</feature>
<feature type="zinc finger region" description="TFIIB-type" evidence="2">
    <location>
        <begin position="34"/>
        <end position="65"/>
    </location>
</feature>
<feature type="binding site" evidence="2">
    <location>
        <position position="38"/>
    </location>
    <ligand>
        <name>Zn(2+)</name>
        <dbReference type="ChEBI" id="CHEBI:29105"/>
    </ligand>
</feature>
<feature type="binding site" evidence="2">
    <location>
        <position position="41"/>
    </location>
    <ligand>
        <name>Zn(2+)</name>
        <dbReference type="ChEBI" id="CHEBI:29105"/>
    </ligand>
</feature>
<feature type="binding site" evidence="2">
    <location>
        <position position="57"/>
    </location>
    <ligand>
        <name>Zn(2+)</name>
        <dbReference type="ChEBI" id="CHEBI:29105"/>
    </ligand>
</feature>
<feature type="binding site" evidence="2">
    <location>
        <position position="60"/>
    </location>
    <ligand>
        <name>Zn(2+)</name>
        <dbReference type="ChEBI" id="CHEBI:29105"/>
    </ligand>
</feature>
<comment type="function">
    <text evidence="1">Stabilizes TBP binding to an archaeal box-A promoter. Also responsible for recruiting RNA polymerase II to the pre-initiation complex (DNA-TBP-TFIIB).</text>
</comment>
<comment type="similarity">
    <text evidence="1">Belongs to the TFIIB family.</text>
</comment>
<organism>
    <name type="scientific">Methanosphaerula palustris (strain ATCC BAA-1556 / DSM 19958 / E1-9c)</name>
    <dbReference type="NCBI Taxonomy" id="521011"/>
    <lineage>
        <taxon>Archaea</taxon>
        <taxon>Methanobacteriati</taxon>
        <taxon>Methanobacteriota</taxon>
        <taxon>Stenosarchaea group</taxon>
        <taxon>Methanomicrobia</taxon>
        <taxon>Methanomicrobiales</taxon>
        <taxon>Methanoregulaceae</taxon>
        <taxon>Methanosphaerula</taxon>
    </lineage>
</organism>
<evidence type="ECO:0000255" key="1">
    <source>
        <dbReference type="HAMAP-Rule" id="MF_00383"/>
    </source>
</evidence>
<evidence type="ECO:0000255" key="2">
    <source>
        <dbReference type="PROSITE-ProRule" id="PRU00469"/>
    </source>
</evidence>
<proteinExistence type="inferred from homology"/>
<protein>
    <recommendedName>
        <fullName evidence="1">Transcription initiation factor IIB</fullName>
        <shortName evidence="1">TFIIB</shortName>
    </recommendedName>
</protein>
<name>TF2B_METPE</name>
<gene>
    <name evidence="1" type="primary">tfb</name>
    <name type="ordered locus">Mpal_0331</name>
</gene>
<dbReference type="EMBL" id="CP001338">
    <property type="protein sequence ID" value="ACL15713.1"/>
    <property type="molecule type" value="Genomic_DNA"/>
</dbReference>
<dbReference type="RefSeq" id="WP_012617032.1">
    <property type="nucleotide sequence ID" value="NC_011832.1"/>
</dbReference>
<dbReference type="SMR" id="B8GJQ9"/>
<dbReference type="STRING" id="521011.Mpal_0331"/>
<dbReference type="GeneID" id="7272635"/>
<dbReference type="KEGG" id="mpl:Mpal_0331"/>
<dbReference type="eggNOG" id="arCOG01981">
    <property type="taxonomic scope" value="Archaea"/>
</dbReference>
<dbReference type="HOGENOM" id="CLU_043736_0_1_2"/>
<dbReference type="OrthoDB" id="7429at2157"/>
<dbReference type="Proteomes" id="UP000002457">
    <property type="component" value="Chromosome"/>
</dbReference>
<dbReference type="GO" id="GO:0097550">
    <property type="term" value="C:transcription preinitiation complex"/>
    <property type="evidence" value="ECO:0007669"/>
    <property type="project" value="TreeGrafter"/>
</dbReference>
<dbReference type="GO" id="GO:0003700">
    <property type="term" value="F:DNA-binding transcription factor activity"/>
    <property type="evidence" value="ECO:0007669"/>
    <property type="project" value="UniProtKB-UniRule"/>
</dbReference>
<dbReference type="GO" id="GO:0017025">
    <property type="term" value="F:TBP-class protein binding"/>
    <property type="evidence" value="ECO:0007669"/>
    <property type="project" value="InterPro"/>
</dbReference>
<dbReference type="GO" id="GO:0008270">
    <property type="term" value="F:zinc ion binding"/>
    <property type="evidence" value="ECO:0007669"/>
    <property type="project" value="UniProtKB-UniRule"/>
</dbReference>
<dbReference type="GO" id="GO:0070897">
    <property type="term" value="P:transcription preinitiation complex assembly"/>
    <property type="evidence" value="ECO:0007669"/>
    <property type="project" value="InterPro"/>
</dbReference>
<dbReference type="CDD" id="cd20549">
    <property type="entry name" value="CYCLIN_TFIIB_archaea_like_rpt1"/>
    <property type="match status" value="1"/>
</dbReference>
<dbReference type="CDD" id="cd20550">
    <property type="entry name" value="CYCLIN_TFIIB_archaea_like_rpt2"/>
    <property type="match status" value="1"/>
</dbReference>
<dbReference type="FunFam" id="1.10.472.10:FF:000023">
    <property type="entry name" value="Transcription initiation factor IIB"/>
    <property type="match status" value="1"/>
</dbReference>
<dbReference type="FunFam" id="1.10.472.170:FF:000001">
    <property type="entry name" value="Transcription initiation factor IIB"/>
    <property type="match status" value="1"/>
</dbReference>
<dbReference type="Gene3D" id="1.10.472.170">
    <property type="match status" value="1"/>
</dbReference>
<dbReference type="Gene3D" id="1.10.472.10">
    <property type="entry name" value="Cyclin-like"/>
    <property type="match status" value="1"/>
</dbReference>
<dbReference type="HAMAP" id="MF_00383">
    <property type="entry name" value="TF2B_arch"/>
    <property type="match status" value="1"/>
</dbReference>
<dbReference type="InterPro" id="IPR013763">
    <property type="entry name" value="Cyclin-like_dom"/>
</dbReference>
<dbReference type="InterPro" id="IPR036915">
    <property type="entry name" value="Cyclin-like_sf"/>
</dbReference>
<dbReference type="InterPro" id="IPR000812">
    <property type="entry name" value="TFIIB"/>
</dbReference>
<dbReference type="InterPro" id="IPR023484">
    <property type="entry name" value="TFIIB_arc"/>
</dbReference>
<dbReference type="InterPro" id="IPR023486">
    <property type="entry name" value="TFIIB_CS"/>
</dbReference>
<dbReference type="InterPro" id="IPR013150">
    <property type="entry name" value="TFIIB_cyclin"/>
</dbReference>
<dbReference type="InterPro" id="IPR013137">
    <property type="entry name" value="Znf_TFIIB"/>
</dbReference>
<dbReference type="NCBIfam" id="NF001658">
    <property type="entry name" value="PRK00423.1"/>
    <property type="match status" value="1"/>
</dbReference>
<dbReference type="PANTHER" id="PTHR11618:SF13">
    <property type="entry name" value="TRANSCRIPTION INITIATION FACTOR IIB"/>
    <property type="match status" value="1"/>
</dbReference>
<dbReference type="PANTHER" id="PTHR11618">
    <property type="entry name" value="TRANSCRIPTION INITIATION FACTOR IIB-RELATED"/>
    <property type="match status" value="1"/>
</dbReference>
<dbReference type="Pfam" id="PF00382">
    <property type="entry name" value="TFIIB"/>
    <property type="match status" value="2"/>
</dbReference>
<dbReference type="Pfam" id="PF08271">
    <property type="entry name" value="Zn_Ribbon_TF"/>
    <property type="match status" value="1"/>
</dbReference>
<dbReference type="PRINTS" id="PR00685">
    <property type="entry name" value="TIFACTORIIB"/>
</dbReference>
<dbReference type="SMART" id="SM00385">
    <property type="entry name" value="CYCLIN"/>
    <property type="match status" value="2"/>
</dbReference>
<dbReference type="SUPFAM" id="SSF47954">
    <property type="entry name" value="Cyclin-like"/>
    <property type="match status" value="2"/>
</dbReference>
<dbReference type="SUPFAM" id="SSF57783">
    <property type="entry name" value="Zinc beta-ribbon"/>
    <property type="match status" value="1"/>
</dbReference>
<dbReference type="PROSITE" id="PS00782">
    <property type="entry name" value="TFIIB"/>
    <property type="match status" value="2"/>
</dbReference>
<dbReference type="PROSITE" id="PS51134">
    <property type="entry name" value="ZF_TFIIB"/>
    <property type="match status" value="1"/>
</dbReference>
<sequence>MQEIEKLRILQTEREALKNRNRVIEHEKKTEDHTESVCPECKSRQLVHDYERAELVCQNCGLVIDDDFIDRGPEWRAFDHDQRMKRSRVGAPMTFTIHDKGLSTMIDWRNRDSYGRAISSKNRAQLYRLRKWQRRIRVSNATERNLAFALSELDRMASALGLPRNVRETAAVVYRDAVDKNLIRGRSIEGVAAAALYAACRQCSVPRTLDEIAEVSRVSRKEIGRTYRFISRELGLKLLPTSPIDYVPRFCSGLTLKGEVQSRAVEILRQAAERELTSGRGPTGVAAAAIYISSILGGERRTQREVAEVAGVTEVTIRNRYKELAEKLDIEIIL</sequence>
<keyword id="KW-0479">Metal-binding</keyword>
<keyword id="KW-1185">Reference proteome</keyword>
<keyword id="KW-0677">Repeat</keyword>
<keyword id="KW-0804">Transcription</keyword>
<keyword id="KW-0805">Transcription regulation</keyword>
<keyword id="KW-0862">Zinc</keyword>
<keyword id="KW-0863">Zinc-finger</keyword>
<accession>B8GJQ9</accession>
<reference key="1">
    <citation type="journal article" date="2015" name="Genome Announc.">
        <title>Complete Genome Sequence of Methanosphaerula palustris E1-9CT, a Hydrogenotrophic Methanogen Isolated from a Minerotrophic Fen Peatland.</title>
        <authorList>
            <person name="Cadillo-Quiroz H."/>
            <person name="Browne P."/>
            <person name="Kyrpides N."/>
            <person name="Woyke T."/>
            <person name="Goodwin L."/>
            <person name="Detter C."/>
            <person name="Yavitt J.B."/>
            <person name="Zinder S.H."/>
        </authorList>
    </citation>
    <scope>NUCLEOTIDE SEQUENCE [LARGE SCALE GENOMIC DNA]</scope>
    <source>
        <strain>ATCC BAA-1556 / DSM 19958 / E1-9c</strain>
    </source>
</reference>